<feature type="signal peptide" evidence="1">
    <location>
        <begin position="1"/>
        <end position="24"/>
    </location>
</feature>
<feature type="chain" id="PRO_0000018907" description="Class I histocompatibility antigen, Gogo-C*0202 alpha chain">
    <location>
        <begin position="25"/>
        <end position="366"/>
    </location>
</feature>
<feature type="topological domain" description="Extracellular" evidence="2">
    <location>
        <begin position="25"/>
        <end position="308"/>
    </location>
</feature>
<feature type="transmembrane region" description="Helical" evidence="2">
    <location>
        <begin position="309"/>
        <end position="332"/>
    </location>
</feature>
<feature type="topological domain" description="Cytoplasmic" evidence="2">
    <location>
        <begin position="333"/>
        <end position="366"/>
    </location>
</feature>
<feature type="domain" description="Ig-like C1-type">
    <location>
        <begin position="209"/>
        <end position="297"/>
    </location>
</feature>
<feature type="region of interest" description="Alpha-1">
    <location>
        <begin position="25"/>
        <end position="114"/>
    </location>
</feature>
<feature type="region of interest" description="Alpha-2">
    <location>
        <begin position="115"/>
        <end position="206"/>
    </location>
</feature>
<feature type="region of interest" description="Alpha-3">
    <location>
        <begin position="207"/>
        <end position="298"/>
    </location>
</feature>
<feature type="region of interest" description="Connecting peptide">
    <location>
        <begin position="299"/>
        <end position="308"/>
    </location>
</feature>
<feature type="glycosylation site" description="N-linked (GlcNAc...) asparagine" evidence="1">
    <location>
        <position position="110"/>
    </location>
</feature>
<feature type="disulfide bond" evidence="3">
    <location>
        <begin position="125"/>
        <end position="188"/>
    </location>
</feature>
<feature type="disulfide bond" evidence="3">
    <location>
        <begin position="227"/>
        <end position="283"/>
    </location>
</feature>
<dbReference type="EMBL" id="X60249">
    <property type="protein sequence ID" value="CAA42801.1"/>
    <property type="molecule type" value="mRNA"/>
</dbReference>
<dbReference type="PIR" id="JH0546">
    <property type="entry name" value="JH0546"/>
</dbReference>
<dbReference type="RefSeq" id="XP_030867700.2">
    <property type="nucleotide sequence ID" value="XM_031011840.3"/>
</dbReference>
<dbReference type="SMR" id="P30386"/>
<dbReference type="FunCoup" id="P30386">
    <property type="interactions" value="1522"/>
</dbReference>
<dbReference type="STRING" id="9593.ENSGGOP00000006482"/>
<dbReference type="GeneID" id="101142998"/>
<dbReference type="InParanoid" id="P30386"/>
<dbReference type="Proteomes" id="UP000001519">
    <property type="component" value="Unplaced"/>
</dbReference>
<dbReference type="GO" id="GO:0031901">
    <property type="term" value="C:early endosome membrane"/>
    <property type="evidence" value="ECO:0007669"/>
    <property type="project" value="UniProtKB-ARBA"/>
</dbReference>
<dbReference type="GO" id="GO:0012507">
    <property type="term" value="C:ER to Golgi transport vesicle membrane"/>
    <property type="evidence" value="ECO:0007669"/>
    <property type="project" value="UniProtKB-ARBA"/>
</dbReference>
<dbReference type="GO" id="GO:0009897">
    <property type="term" value="C:external side of plasma membrane"/>
    <property type="evidence" value="ECO:0000318"/>
    <property type="project" value="GO_Central"/>
</dbReference>
<dbReference type="GO" id="GO:0005615">
    <property type="term" value="C:extracellular space"/>
    <property type="evidence" value="ECO:0000318"/>
    <property type="project" value="GO_Central"/>
</dbReference>
<dbReference type="GO" id="GO:0098553">
    <property type="term" value="C:lumenal side of endoplasmic reticulum membrane"/>
    <property type="evidence" value="ECO:0007669"/>
    <property type="project" value="UniProtKB-ARBA"/>
</dbReference>
<dbReference type="GO" id="GO:0042612">
    <property type="term" value="C:MHC class I protein complex"/>
    <property type="evidence" value="ECO:0007669"/>
    <property type="project" value="UniProtKB-KW"/>
</dbReference>
<dbReference type="GO" id="GO:0030670">
    <property type="term" value="C:phagocytic vesicle membrane"/>
    <property type="evidence" value="ECO:0007669"/>
    <property type="project" value="UniProtKB-ARBA"/>
</dbReference>
<dbReference type="GO" id="GO:0055038">
    <property type="term" value="C:recycling endosome membrane"/>
    <property type="evidence" value="ECO:0007669"/>
    <property type="project" value="UniProtKB-ARBA"/>
</dbReference>
<dbReference type="GO" id="GO:0042605">
    <property type="term" value="F:peptide antigen binding"/>
    <property type="evidence" value="ECO:0000318"/>
    <property type="project" value="GO_Central"/>
</dbReference>
<dbReference type="GO" id="GO:0005102">
    <property type="term" value="F:signaling receptor binding"/>
    <property type="evidence" value="ECO:0000318"/>
    <property type="project" value="GO_Central"/>
</dbReference>
<dbReference type="GO" id="GO:0002486">
    <property type="term" value="P:antigen processing and presentation of endogenous peptide antigen via MHC class I via ER pathway, TAP-independent"/>
    <property type="evidence" value="ECO:0000318"/>
    <property type="project" value="GO_Central"/>
</dbReference>
<dbReference type="GO" id="GO:0002476">
    <property type="term" value="P:antigen processing and presentation of endogenous peptide antigen via MHC class Ib"/>
    <property type="evidence" value="ECO:0000318"/>
    <property type="project" value="GO_Central"/>
</dbReference>
<dbReference type="GO" id="GO:0006955">
    <property type="term" value="P:immune response"/>
    <property type="evidence" value="ECO:0000318"/>
    <property type="project" value="GO_Central"/>
</dbReference>
<dbReference type="GO" id="GO:0001916">
    <property type="term" value="P:positive regulation of T cell mediated cytotoxicity"/>
    <property type="evidence" value="ECO:0000318"/>
    <property type="project" value="GO_Central"/>
</dbReference>
<dbReference type="CDD" id="cd21026">
    <property type="entry name" value="IgC1_MHC_Ia_HLA-B"/>
    <property type="match status" value="1"/>
</dbReference>
<dbReference type="FunFam" id="2.60.40.10:FF:000014">
    <property type="entry name" value="H-2 class I histocompatibility antigen, alpha chain"/>
    <property type="match status" value="1"/>
</dbReference>
<dbReference type="FunFam" id="3.30.500.10:FF:000001">
    <property type="entry name" value="H-2 class I histocompatibility antigen, alpha chain"/>
    <property type="match status" value="1"/>
</dbReference>
<dbReference type="Gene3D" id="2.60.40.10">
    <property type="entry name" value="Immunoglobulins"/>
    <property type="match status" value="1"/>
</dbReference>
<dbReference type="Gene3D" id="3.30.500.10">
    <property type="entry name" value="MHC class I-like antigen recognition-like"/>
    <property type="match status" value="1"/>
</dbReference>
<dbReference type="InterPro" id="IPR007110">
    <property type="entry name" value="Ig-like_dom"/>
</dbReference>
<dbReference type="InterPro" id="IPR036179">
    <property type="entry name" value="Ig-like_dom_sf"/>
</dbReference>
<dbReference type="InterPro" id="IPR013783">
    <property type="entry name" value="Ig-like_fold"/>
</dbReference>
<dbReference type="InterPro" id="IPR003597">
    <property type="entry name" value="Ig_C1-set"/>
</dbReference>
<dbReference type="InterPro" id="IPR050208">
    <property type="entry name" value="MHC_class-I_related"/>
</dbReference>
<dbReference type="InterPro" id="IPR011161">
    <property type="entry name" value="MHC_I-like_Ag-recog"/>
</dbReference>
<dbReference type="InterPro" id="IPR037055">
    <property type="entry name" value="MHC_I-like_Ag-recog_sf"/>
</dbReference>
<dbReference type="InterPro" id="IPR011162">
    <property type="entry name" value="MHC_I/II-like_Ag-recog"/>
</dbReference>
<dbReference type="InterPro" id="IPR001039">
    <property type="entry name" value="MHC_I_a_a1/a2"/>
</dbReference>
<dbReference type="InterPro" id="IPR010579">
    <property type="entry name" value="MHC_I_a_C"/>
</dbReference>
<dbReference type="PANTHER" id="PTHR16675:SF251">
    <property type="entry name" value="HLA CLASS I HISTOCOMPATIBILITY ANTIGEN, C ALPHA CHAIN"/>
    <property type="match status" value="1"/>
</dbReference>
<dbReference type="PANTHER" id="PTHR16675">
    <property type="entry name" value="MHC CLASS I-RELATED"/>
    <property type="match status" value="1"/>
</dbReference>
<dbReference type="Pfam" id="PF07654">
    <property type="entry name" value="C1-set"/>
    <property type="match status" value="1"/>
</dbReference>
<dbReference type="Pfam" id="PF00129">
    <property type="entry name" value="MHC_I"/>
    <property type="match status" value="1"/>
</dbReference>
<dbReference type="Pfam" id="PF06623">
    <property type="entry name" value="MHC_I_C"/>
    <property type="match status" value="1"/>
</dbReference>
<dbReference type="PRINTS" id="PR01638">
    <property type="entry name" value="MHCCLASSI"/>
</dbReference>
<dbReference type="SMART" id="SM00407">
    <property type="entry name" value="IGc1"/>
    <property type="match status" value="1"/>
</dbReference>
<dbReference type="SUPFAM" id="SSF48726">
    <property type="entry name" value="Immunoglobulin"/>
    <property type="match status" value="1"/>
</dbReference>
<dbReference type="SUPFAM" id="SSF54452">
    <property type="entry name" value="MHC antigen-recognition domain"/>
    <property type="match status" value="1"/>
</dbReference>
<dbReference type="PROSITE" id="PS50835">
    <property type="entry name" value="IG_LIKE"/>
    <property type="match status" value="1"/>
</dbReference>
<reference key="1">
    <citation type="journal article" date="1991" name="J. Exp. Med.">
        <title>Gorilla class I major histocompatibility complex alleles: comparison to human and chimpanzee class I.</title>
        <authorList>
            <person name="Lawlor D.A."/>
            <person name="Warren E."/>
            <person name="Taylor P."/>
            <person name="Parham P."/>
        </authorList>
    </citation>
    <scope>NUCLEOTIDE SEQUENCE [MRNA]</scope>
</reference>
<accession>P30386</accession>
<organism>
    <name type="scientific">Gorilla gorilla gorilla</name>
    <name type="common">Western lowland gorilla</name>
    <dbReference type="NCBI Taxonomy" id="9595"/>
    <lineage>
        <taxon>Eukaryota</taxon>
        <taxon>Metazoa</taxon>
        <taxon>Chordata</taxon>
        <taxon>Craniata</taxon>
        <taxon>Vertebrata</taxon>
        <taxon>Euteleostomi</taxon>
        <taxon>Mammalia</taxon>
        <taxon>Eutheria</taxon>
        <taxon>Euarchontoglires</taxon>
        <taxon>Primates</taxon>
        <taxon>Haplorrhini</taxon>
        <taxon>Catarrhini</taxon>
        <taxon>Hominidae</taxon>
        <taxon>Gorilla</taxon>
    </lineage>
</organism>
<comment type="function">
    <text>Involved in the presentation of foreign antigens to the immune system.</text>
</comment>
<comment type="subunit">
    <text>Heterodimer of an alpha chain and a beta chain (beta-2-microglobulin).</text>
</comment>
<comment type="subcellular location">
    <subcellularLocation>
        <location>Membrane</location>
        <topology>Single-pass type I membrane protein</topology>
    </subcellularLocation>
</comment>
<comment type="similarity">
    <text evidence="4">Belongs to the MHC class I family.</text>
</comment>
<sequence>MRVMAPRTLILLLSGALALTETWAGSHSMRYFYTSVSRPGRGEPRFISVGYVDDTQFVRFDSDAASPRGEPRAPWVEQEGPEYWDRETQKYKRQAQTDRVNLRKLRGYYNQSEDGSHTLQSMYGCDLGPDGRLLRGYSQFAYDGKDYIALNEDLRSWTAADTAAQITQRKLEAARAAEQQRAYLEGLCVESLRRYLENGKETLQRAEPPKTHVTHHPLSDHEATLRCWALGFYPAEITLTWQRDGEDQTQDTELVETRPAGDGTFQKWAAVVVPSGQEQRYTCHMQHEGLPEPLTLRWEPSSQPTIPIVGIVVGLAVLVVLAVLGAVVTAMMCRRKSSGGKGGSCSQAACSNSAQGSDESLITCKA</sequence>
<evidence type="ECO:0000250" key="1"/>
<evidence type="ECO:0000255" key="2"/>
<evidence type="ECO:0000255" key="3">
    <source>
        <dbReference type="PROSITE-ProRule" id="PRU00114"/>
    </source>
</evidence>
<evidence type="ECO:0000305" key="4"/>
<protein>
    <recommendedName>
        <fullName>Class I histocompatibility antigen, Gogo-C*0202 alpha chain</fullName>
    </recommendedName>
</protein>
<keyword id="KW-1015">Disulfide bond</keyword>
<keyword id="KW-0325">Glycoprotein</keyword>
<keyword id="KW-0391">Immunity</keyword>
<keyword id="KW-0472">Membrane</keyword>
<keyword id="KW-0490">MHC I</keyword>
<keyword id="KW-1185">Reference proteome</keyword>
<keyword id="KW-0732">Signal</keyword>
<keyword id="KW-0812">Transmembrane</keyword>
<keyword id="KW-1133">Transmembrane helix</keyword>
<name>1C03_GORGO</name>
<proteinExistence type="evidence at transcript level"/>